<proteinExistence type="inferred from homology"/>
<sequence>MNLNATLFAQMVVFLVLAWFTMKFVWPPLINALDERSKKIADGLAAAEKGKAELEAAHKRVDQELAQARNDGQQRIADAEKRALAVADEIKTNAQAEAARIIAQAKAEAEQQIVKARETLRGEVAALAVKGAEQILKREVDQTAHAELLNQLKAEL</sequence>
<gene>
    <name evidence="1" type="primary">atpF</name>
    <name type="ordered locus">BPSL3400</name>
</gene>
<keyword id="KW-0066">ATP synthesis</keyword>
<keyword id="KW-0997">Cell inner membrane</keyword>
<keyword id="KW-1003">Cell membrane</keyword>
<keyword id="KW-0138">CF(0)</keyword>
<keyword id="KW-0375">Hydrogen ion transport</keyword>
<keyword id="KW-0406">Ion transport</keyword>
<keyword id="KW-0472">Membrane</keyword>
<keyword id="KW-1185">Reference proteome</keyword>
<keyword id="KW-0812">Transmembrane</keyword>
<keyword id="KW-1133">Transmembrane helix</keyword>
<keyword id="KW-0813">Transport</keyword>
<name>ATPF_BURPS</name>
<reference key="1">
    <citation type="journal article" date="2004" name="Proc. Natl. Acad. Sci. U.S.A.">
        <title>Genomic plasticity of the causative agent of melioidosis, Burkholderia pseudomallei.</title>
        <authorList>
            <person name="Holden M.T.G."/>
            <person name="Titball R.W."/>
            <person name="Peacock S.J."/>
            <person name="Cerdeno-Tarraga A.-M."/>
            <person name="Atkins T."/>
            <person name="Crossman L.C."/>
            <person name="Pitt T."/>
            <person name="Churcher C."/>
            <person name="Mungall K.L."/>
            <person name="Bentley S.D."/>
            <person name="Sebaihia M."/>
            <person name="Thomson N.R."/>
            <person name="Bason N."/>
            <person name="Beacham I.R."/>
            <person name="Brooks K."/>
            <person name="Brown K.A."/>
            <person name="Brown N.F."/>
            <person name="Challis G.L."/>
            <person name="Cherevach I."/>
            <person name="Chillingworth T."/>
            <person name="Cronin A."/>
            <person name="Crossett B."/>
            <person name="Davis P."/>
            <person name="DeShazer D."/>
            <person name="Feltwell T."/>
            <person name="Fraser A."/>
            <person name="Hance Z."/>
            <person name="Hauser H."/>
            <person name="Holroyd S."/>
            <person name="Jagels K."/>
            <person name="Keith K.E."/>
            <person name="Maddison M."/>
            <person name="Moule S."/>
            <person name="Price C."/>
            <person name="Quail M.A."/>
            <person name="Rabbinowitsch E."/>
            <person name="Rutherford K."/>
            <person name="Sanders M."/>
            <person name="Simmonds M."/>
            <person name="Songsivilai S."/>
            <person name="Stevens K."/>
            <person name="Tumapa S."/>
            <person name="Vesaratchavest M."/>
            <person name="Whitehead S."/>
            <person name="Yeats C."/>
            <person name="Barrell B.G."/>
            <person name="Oyston P.C.F."/>
            <person name="Parkhill J."/>
        </authorList>
    </citation>
    <scope>NUCLEOTIDE SEQUENCE [LARGE SCALE GENOMIC DNA]</scope>
    <source>
        <strain>K96243</strain>
    </source>
</reference>
<protein>
    <recommendedName>
        <fullName evidence="1">ATP synthase subunit b</fullName>
    </recommendedName>
    <alternativeName>
        <fullName evidence="1">ATP synthase F(0) sector subunit b</fullName>
    </alternativeName>
    <alternativeName>
        <fullName evidence="1">ATPase subunit I</fullName>
    </alternativeName>
    <alternativeName>
        <fullName evidence="1">F-type ATPase subunit b</fullName>
        <shortName evidence="1">F-ATPase subunit b</shortName>
    </alternativeName>
</protein>
<accession>Q63PH6</accession>
<organism>
    <name type="scientific">Burkholderia pseudomallei (strain K96243)</name>
    <dbReference type="NCBI Taxonomy" id="272560"/>
    <lineage>
        <taxon>Bacteria</taxon>
        <taxon>Pseudomonadati</taxon>
        <taxon>Pseudomonadota</taxon>
        <taxon>Betaproteobacteria</taxon>
        <taxon>Burkholderiales</taxon>
        <taxon>Burkholderiaceae</taxon>
        <taxon>Burkholderia</taxon>
        <taxon>pseudomallei group</taxon>
    </lineage>
</organism>
<dbReference type="EMBL" id="BX571965">
    <property type="protein sequence ID" value="CAH37412.1"/>
    <property type="status" value="ALT_INIT"/>
    <property type="molecule type" value="Genomic_DNA"/>
</dbReference>
<dbReference type="RefSeq" id="WP_004185283.1">
    <property type="nucleotide sequence ID" value="NZ_CP009538.1"/>
</dbReference>
<dbReference type="RefSeq" id="YP_109993.1">
    <property type="nucleotide sequence ID" value="NC_006350.1"/>
</dbReference>
<dbReference type="SMR" id="Q63PH6"/>
<dbReference type="STRING" id="272560.BPSL3400"/>
<dbReference type="KEGG" id="bps:BPSL3400"/>
<dbReference type="PATRIC" id="fig|272560.51.peg.1790"/>
<dbReference type="eggNOG" id="COG0711">
    <property type="taxonomic scope" value="Bacteria"/>
</dbReference>
<dbReference type="Proteomes" id="UP000000605">
    <property type="component" value="Chromosome 1"/>
</dbReference>
<dbReference type="GO" id="GO:0005886">
    <property type="term" value="C:plasma membrane"/>
    <property type="evidence" value="ECO:0007669"/>
    <property type="project" value="UniProtKB-SubCell"/>
</dbReference>
<dbReference type="GO" id="GO:0045259">
    <property type="term" value="C:proton-transporting ATP synthase complex"/>
    <property type="evidence" value="ECO:0007669"/>
    <property type="project" value="UniProtKB-KW"/>
</dbReference>
<dbReference type="GO" id="GO:0046933">
    <property type="term" value="F:proton-transporting ATP synthase activity, rotational mechanism"/>
    <property type="evidence" value="ECO:0007669"/>
    <property type="project" value="UniProtKB-UniRule"/>
</dbReference>
<dbReference type="GO" id="GO:0046961">
    <property type="term" value="F:proton-transporting ATPase activity, rotational mechanism"/>
    <property type="evidence" value="ECO:0007669"/>
    <property type="project" value="TreeGrafter"/>
</dbReference>
<dbReference type="CDD" id="cd06503">
    <property type="entry name" value="ATP-synt_Fo_b"/>
    <property type="match status" value="1"/>
</dbReference>
<dbReference type="Gene3D" id="6.10.250.1580">
    <property type="match status" value="1"/>
</dbReference>
<dbReference type="HAMAP" id="MF_01398">
    <property type="entry name" value="ATP_synth_b_bprime"/>
    <property type="match status" value="1"/>
</dbReference>
<dbReference type="InterPro" id="IPR028987">
    <property type="entry name" value="ATP_synth_B-like_membr_sf"/>
</dbReference>
<dbReference type="InterPro" id="IPR002146">
    <property type="entry name" value="ATP_synth_b/b'su_bac/chlpt"/>
</dbReference>
<dbReference type="InterPro" id="IPR005864">
    <property type="entry name" value="ATP_synth_F0_bsu_bac"/>
</dbReference>
<dbReference type="InterPro" id="IPR050059">
    <property type="entry name" value="ATP_synthase_B_chain"/>
</dbReference>
<dbReference type="NCBIfam" id="TIGR01144">
    <property type="entry name" value="ATP_synt_b"/>
    <property type="match status" value="1"/>
</dbReference>
<dbReference type="NCBIfam" id="NF004411">
    <property type="entry name" value="PRK05759.1-2"/>
    <property type="match status" value="1"/>
</dbReference>
<dbReference type="PANTHER" id="PTHR33445:SF1">
    <property type="entry name" value="ATP SYNTHASE SUBUNIT B"/>
    <property type="match status" value="1"/>
</dbReference>
<dbReference type="PANTHER" id="PTHR33445">
    <property type="entry name" value="ATP SYNTHASE SUBUNIT B', CHLOROPLASTIC"/>
    <property type="match status" value="1"/>
</dbReference>
<dbReference type="Pfam" id="PF00430">
    <property type="entry name" value="ATP-synt_B"/>
    <property type="match status" value="1"/>
</dbReference>
<dbReference type="SUPFAM" id="SSF81573">
    <property type="entry name" value="F1F0 ATP synthase subunit B, membrane domain"/>
    <property type="match status" value="1"/>
</dbReference>
<feature type="chain" id="PRO_0000368391" description="ATP synthase subunit b">
    <location>
        <begin position="1"/>
        <end position="156"/>
    </location>
</feature>
<feature type="transmembrane region" description="Helical" evidence="1">
    <location>
        <begin position="7"/>
        <end position="29"/>
    </location>
</feature>
<comment type="function">
    <text evidence="1">F(1)F(0) ATP synthase produces ATP from ADP in the presence of a proton or sodium gradient. F-type ATPases consist of two structural domains, F(1) containing the extramembraneous catalytic core and F(0) containing the membrane proton channel, linked together by a central stalk and a peripheral stalk. During catalysis, ATP synthesis in the catalytic domain of F(1) is coupled via a rotary mechanism of the central stalk subunits to proton translocation.</text>
</comment>
<comment type="function">
    <text evidence="1">Component of the F(0) channel, it forms part of the peripheral stalk, linking F(1) to F(0).</text>
</comment>
<comment type="subunit">
    <text evidence="1">F-type ATPases have 2 components, F(1) - the catalytic core - and F(0) - the membrane proton channel. F(1) has five subunits: alpha(3), beta(3), gamma(1), delta(1), epsilon(1). F(0) has three main subunits: a(1), b(2) and c(10-14). The alpha and beta chains form an alternating ring which encloses part of the gamma chain. F(1) is attached to F(0) by a central stalk formed by the gamma and epsilon chains, while a peripheral stalk is formed by the delta and b chains.</text>
</comment>
<comment type="subcellular location">
    <subcellularLocation>
        <location evidence="1">Cell inner membrane</location>
        <topology evidence="1">Single-pass membrane protein</topology>
    </subcellularLocation>
</comment>
<comment type="similarity">
    <text evidence="1">Belongs to the ATPase B chain family.</text>
</comment>
<comment type="sequence caution" evidence="2">
    <conflict type="erroneous initiation">
        <sequence resource="EMBL-CDS" id="CAH37412"/>
    </conflict>
</comment>
<evidence type="ECO:0000255" key="1">
    <source>
        <dbReference type="HAMAP-Rule" id="MF_01398"/>
    </source>
</evidence>
<evidence type="ECO:0000305" key="2"/>